<reference key="1">
    <citation type="journal article" date="2004" name="Nature">
        <title>Genome sequence of the Brown Norway rat yields insights into mammalian evolution.</title>
        <authorList>
            <person name="Gibbs R.A."/>
            <person name="Weinstock G.M."/>
            <person name="Metzker M.L."/>
            <person name="Muzny D.M."/>
            <person name="Sodergren E.J."/>
            <person name="Scherer S."/>
            <person name="Scott G."/>
            <person name="Steffen D."/>
            <person name="Worley K.C."/>
            <person name="Burch P.E."/>
            <person name="Okwuonu G."/>
            <person name="Hines S."/>
            <person name="Lewis L."/>
            <person name="Deramo C."/>
            <person name="Delgado O."/>
            <person name="Dugan-Rocha S."/>
            <person name="Miner G."/>
            <person name="Morgan M."/>
            <person name="Hawes A."/>
            <person name="Gill R."/>
            <person name="Holt R.A."/>
            <person name="Adams M.D."/>
            <person name="Amanatides P.G."/>
            <person name="Baden-Tillson H."/>
            <person name="Barnstead M."/>
            <person name="Chin S."/>
            <person name="Evans C.A."/>
            <person name="Ferriera S."/>
            <person name="Fosler C."/>
            <person name="Glodek A."/>
            <person name="Gu Z."/>
            <person name="Jennings D."/>
            <person name="Kraft C.L."/>
            <person name="Nguyen T."/>
            <person name="Pfannkoch C.M."/>
            <person name="Sitter C."/>
            <person name="Sutton G.G."/>
            <person name="Venter J.C."/>
            <person name="Woodage T."/>
            <person name="Smith D."/>
            <person name="Lee H.-M."/>
            <person name="Gustafson E."/>
            <person name="Cahill P."/>
            <person name="Kana A."/>
            <person name="Doucette-Stamm L."/>
            <person name="Weinstock K."/>
            <person name="Fechtel K."/>
            <person name="Weiss R.B."/>
            <person name="Dunn D.M."/>
            <person name="Green E.D."/>
            <person name="Blakesley R.W."/>
            <person name="Bouffard G.G."/>
            <person name="De Jong P.J."/>
            <person name="Osoegawa K."/>
            <person name="Zhu B."/>
            <person name="Marra M."/>
            <person name="Schein J."/>
            <person name="Bosdet I."/>
            <person name="Fjell C."/>
            <person name="Jones S."/>
            <person name="Krzywinski M."/>
            <person name="Mathewson C."/>
            <person name="Siddiqui A."/>
            <person name="Wye N."/>
            <person name="McPherson J."/>
            <person name="Zhao S."/>
            <person name="Fraser C.M."/>
            <person name="Shetty J."/>
            <person name="Shatsman S."/>
            <person name="Geer K."/>
            <person name="Chen Y."/>
            <person name="Abramzon S."/>
            <person name="Nierman W.C."/>
            <person name="Havlak P.H."/>
            <person name="Chen R."/>
            <person name="Durbin K.J."/>
            <person name="Egan A."/>
            <person name="Ren Y."/>
            <person name="Song X.-Z."/>
            <person name="Li B."/>
            <person name="Liu Y."/>
            <person name="Qin X."/>
            <person name="Cawley S."/>
            <person name="Cooney A.J."/>
            <person name="D'Souza L.M."/>
            <person name="Martin K."/>
            <person name="Wu J.Q."/>
            <person name="Gonzalez-Garay M.L."/>
            <person name="Jackson A.R."/>
            <person name="Kalafus K.J."/>
            <person name="McLeod M.P."/>
            <person name="Milosavljevic A."/>
            <person name="Virk D."/>
            <person name="Volkov A."/>
            <person name="Wheeler D.A."/>
            <person name="Zhang Z."/>
            <person name="Bailey J.A."/>
            <person name="Eichler E.E."/>
            <person name="Tuzun E."/>
            <person name="Birney E."/>
            <person name="Mongin E."/>
            <person name="Ureta-Vidal A."/>
            <person name="Woodwark C."/>
            <person name="Zdobnov E."/>
            <person name="Bork P."/>
            <person name="Suyama M."/>
            <person name="Torrents D."/>
            <person name="Alexandersson M."/>
            <person name="Trask B.J."/>
            <person name="Young J.M."/>
            <person name="Huang H."/>
            <person name="Wang H."/>
            <person name="Xing H."/>
            <person name="Daniels S."/>
            <person name="Gietzen D."/>
            <person name="Schmidt J."/>
            <person name="Stevens K."/>
            <person name="Vitt U."/>
            <person name="Wingrove J."/>
            <person name="Camara F."/>
            <person name="Mar Alba M."/>
            <person name="Abril J.F."/>
            <person name="Guigo R."/>
            <person name="Smit A."/>
            <person name="Dubchak I."/>
            <person name="Rubin E.M."/>
            <person name="Couronne O."/>
            <person name="Poliakov A."/>
            <person name="Huebner N."/>
            <person name="Ganten D."/>
            <person name="Goesele C."/>
            <person name="Hummel O."/>
            <person name="Kreitler T."/>
            <person name="Lee Y.-A."/>
            <person name="Monti J."/>
            <person name="Schulz H."/>
            <person name="Zimdahl H."/>
            <person name="Himmelbauer H."/>
            <person name="Lehrach H."/>
            <person name="Jacob H.J."/>
            <person name="Bromberg S."/>
            <person name="Gullings-Handley J."/>
            <person name="Jensen-Seaman M.I."/>
            <person name="Kwitek A.E."/>
            <person name="Lazar J."/>
            <person name="Pasko D."/>
            <person name="Tonellato P.J."/>
            <person name="Twigger S."/>
            <person name="Ponting C.P."/>
            <person name="Duarte J.M."/>
            <person name="Rice S."/>
            <person name="Goodstadt L."/>
            <person name="Beatson S.A."/>
            <person name="Emes R.D."/>
            <person name="Winter E.E."/>
            <person name="Webber C."/>
            <person name="Brandt P."/>
            <person name="Nyakatura G."/>
            <person name="Adetobi M."/>
            <person name="Chiaromonte F."/>
            <person name="Elnitski L."/>
            <person name="Eswara P."/>
            <person name="Hardison R.C."/>
            <person name="Hou M."/>
            <person name="Kolbe D."/>
            <person name="Makova K."/>
            <person name="Miller W."/>
            <person name="Nekrutenko A."/>
            <person name="Riemer C."/>
            <person name="Schwartz S."/>
            <person name="Taylor J."/>
            <person name="Yang S."/>
            <person name="Zhang Y."/>
            <person name="Lindpaintner K."/>
            <person name="Andrews T.D."/>
            <person name="Caccamo M."/>
            <person name="Clamp M."/>
            <person name="Clarke L."/>
            <person name="Curwen V."/>
            <person name="Durbin R.M."/>
            <person name="Eyras E."/>
            <person name="Searle S.M."/>
            <person name="Cooper G.M."/>
            <person name="Batzoglou S."/>
            <person name="Brudno M."/>
            <person name="Sidow A."/>
            <person name="Stone E.A."/>
            <person name="Payseur B.A."/>
            <person name="Bourque G."/>
            <person name="Lopez-Otin C."/>
            <person name="Puente X.S."/>
            <person name="Chakrabarti K."/>
            <person name="Chatterji S."/>
            <person name="Dewey C."/>
            <person name="Pachter L."/>
            <person name="Bray N."/>
            <person name="Yap V.B."/>
            <person name="Caspi A."/>
            <person name="Tesler G."/>
            <person name="Pevzner P.A."/>
            <person name="Haussler D."/>
            <person name="Roskin K.M."/>
            <person name="Baertsch R."/>
            <person name="Clawson H."/>
            <person name="Furey T.S."/>
            <person name="Hinrichs A.S."/>
            <person name="Karolchik D."/>
            <person name="Kent W.J."/>
            <person name="Rosenbloom K.R."/>
            <person name="Trumbower H."/>
            <person name="Weirauch M."/>
            <person name="Cooper D.N."/>
            <person name="Stenson P.D."/>
            <person name="Ma B."/>
            <person name="Brent M."/>
            <person name="Arumugam M."/>
            <person name="Shteynberg D."/>
            <person name="Copley R.R."/>
            <person name="Taylor M.S."/>
            <person name="Riethman H."/>
            <person name="Mudunuri U."/>
            <person name="Peterson J."/>
            <person name="Guyer M."/>
            <person name="Felsenfeld A."/>
            <person name="Old S."/>
            <person name="Mockrin S."/>
            <person name="Collins F.S."/>
        </authorList>
    </citation>
    <scope>NUCLEOTIDE SEQUENCE [LARGE SCALE GENOMIC DNA]</scope>
    <source>
        <strain>Brown Norway</strain>
    </source>
</reference>
<reference key="2">
    <citation type="journal article" date="2010" name="Proc. Natl. Acad. Sci. U.S.A.">
        <title>Esophageal cancer-related gene 4 is a secreted inducer of cell senescence expressed by aged CNS precursor cells.</title>
        <authorList>
            <person name="Kujuro Y."/>
            <person name="Suzuki N."/>
            <person name="Kondo T."/>
        </authorList>
    </citation>
    <scope>FUNCTION</scope>
</reference>
<reference key="3">
    <citation type="journal article" date="2011" name="Fluids Barriers CNS">
        <title>Ecrg4 expression and its product augurin in the choroid plexus: impact on fetal brain development, cerebrospinal fluid homeostasis and neuroprogenitor cell response to CNS injury.</title>
        <authorList>
            <person name="Gonzalez A.M."/>
            <person name="Podvin S."/>
            <person name="Lin S.Y."/>
            <person name="Miller M.C."/>
            <person name="Botfield H."/>
            <person name="Leadbeater W.E."/>
            <person name="Roberton A."/>
            <person name="Dang X."/>
            <person name="Knowling S.E."/>
            <person name="Cardenas-Galindo E."/>
            <person name="Donahue J.E."/>
            <person name="Stopa E.G."/>
            <person name="Johanson C.E."/>
            <person name="Coimbra R."/>
            <person name="Eliceiri B.P."/>
            <person name="Baird A."/>
        </authorList>
    </citation>
    <scope>FUNCTION</scope>
    <scope>SUBCELLULAR LOCATION</scope>
    <scope>TISSUE SPECIFICITY</scope>
    <scope>INDUCTION</scope>
</reference>
<reference key="4">
    <citation type="journal article" date="2015" name="J. Proteome Res.">
        <title>Peptidomics for studying limited proteolysis.</title>
        <authorList>
            <person name="Tsuchiya T."/>
            <person name="Osaki T."/>
            <person name="Minamino N."/>
            <person name="Sasaki K."/>
        </authorList>
    </citation>
    <scope>CLEAVAGE OF SIGNAL PEPTIDE AFTER GLY-31</scope>
    <scope>CLEAVAGE OF PROPEPTIDE AFTER ALA-68</scope>
    <scope>IDENTIFICATION BY MASS SPECTROMETRY</scope>
</reference>
<accession>D4A540</accession>
<keyword id="KW-1003">Cell membrane</keyword>
<keyword id="KW-0165">Cleavage on pair of basic residues</keyword>
<keyword id="KW-0963">Cytoplasm</keyword>
<keyword id="KW-0472">Membrane</keyword>
<keyword id="KW-1185">Reference proteome</keyword>
<keyword id="KW-0964">Secreted</keyword>
<keyword id="KW-0732">Signal</keyword>
<protein>
    <recommendedName>
        <fullName evidence="6">Augurin</fullName>
    </recommendedName>
    <alternativeName>
        <fullName>Esophageal cancer-related gene 4 protein homolog</fullName>
    </alternativeName>
</protein>
<dbReference type="RefSeq" id="NP_001257980.1">
    <property type="nucleotide sequence ID" value="NM_001271051.1"/>
</dbReference>
<dbReference type="FunCoup" id="D4A540">
    <property type="interactions" value="15"/>
</dbReference>
<dbReference type="STRING" id="10116.ENSRNOP00000030526"/>
<dbReference type="iPTMnet" id="D4A540"/>
<dbReference type="PhosphoSitePlus" id="D4A540"/>
<dbReference type="PaxDb" id="10116-ENSRNOP00000030526"/>
<dbReference type="Ensembl" id="ENSRNOT00000036990.7">
    <property type="protein sequence ID" value="ENSRNOP00000030526.4"/>
    <property type="gene ID" value="ENSRNOG00000023576.7"/>
</dbReference>
<dbReference type="GeneID" id="363225"/>
<dbReference type="KEGG" id="rno:363225"/>
<dbReference type="UCSC" id="RGD:1305645">
    <property type="organism name" value="rat"/>
</dbReference>
<dbReference type="AGR" id="RGD:1305645"/>
<dbReference type="CTD" id="84417"/>
<dbReference type="RGD" id="1305645">
    <property type="gene designation" value="Ecrg4"/>
</dbReference>
<dbReference type="eggNOG" id="ENOG502RZPP">
    <property type="taxonomic scope" value="Eukaryota"/>
</dbReference>
<dbReference type="GeneTree" id="ENSGT00390000000145"/>
<dbReference type="HOGENOM" id="CLU_153579_0_0_1"/>
<dbReference type="InParanoid" id="D4A540"/>
<dbReference type="OMA" id="WLNRGRN"/>
<dbReference type="OrthoDB" id="78652at9989"/>
<dbReference type="PhylomeDB" id="D4A540"/>
<dbReference type="TreeFam" id="TF336161"/>
<dbReference type="PRO" id="PR:D4A540"/>
<dbReference type="Proteomes" id="UP000002494">
    <property type="component" value="Chromosome 9"/>
</dbReference>
<dbReference type="Bgee" id="ENSRNOG00000023576">
    <property type="expression patterns" value="Expressed in kidney and 19 other cell types or tissues"/>
</dbReference>
<dbReference type="GO" id="GO:0016324">
    <property type="term" value="C:apical plasma membrane"/>
    <property type="evidence" value="ECO:0007669"/>
    <property type="project" value="UniProtKB-SubCell"/>
</dbReference>
<dbReference type="GO" id="GO:0031045">
    <property type="term" value="C:dense core granule"/>
    <property type="evidence" value="ECO:0000250"/>
    <property type="project" value="UniProtKB"/>
</dbReference>
<dbReference type="GO" id="GO:0005615">
    <property type="term" value="C:extracellular space"/>
    <property type="evidence" value="ECO:0000250"/>
    <property type="project" value="UniProtKB"/>
</dbReference>
<dbReference type="GO" id="GO:0031145">
    <property type="term" value="P:anaphase-promoting complex-dependent catabolic process"/>
    <property type="evidence" value="ECO:0000266"/>
    <property type="project" value="RGD"/>
</dbReference>
<dbReference type="GO" id="GO:0090398">
    <property type="term" value="P:cellular senescence"/>
    <property type="evidence" value="ECO:0000266"/>
    <property type="project" value="RGD"/>
</dbReference>
<dbReference type="GO" id="GO:0007417">
    <property type="term" value="P:central nervous system development"/>
    <property type="evidence" value="ECO:0000318"/>
    <property type="project" value="GO_Central"/>
</dbReference>
<dbReference type="GO" id="GO:0070314">
    <property type="term" value="P:G1 to G0 transition"/>
    <property type="evidence" value="ECO:0000266"/>
    <property type="project" value="RGD"/>
</dbReference>
<dbReference type="GO" id="GO:0042127">
    <property type="term" value="P:regulation of cell population proliferation"/>
    <property type="evidence" value="ECO:0000318"/>
    <property type="project" value="GO_Central"/>
</dbReference>
<dbReference type="InterPro" id="IPR028173">
    <property type="entry name" value="Augurin"/>
</dbReference>
<dbReference type="PANTHER" id="PTHR31613">
    <property type="entry name" value="AUGURIN"/>
    <property type="match status" value="1"/>
</dbReference>
<dbReference type="PANTHER" id="PTHR31613:SF2">
    <property type="entry name" value="AUGURIN"/>
    <property type="match status" value="1"/>
</dbReference>
<dbReference type="Pfam" id="PF15187">
    <property type="entry name" value="Augurin"/>
    <property type="match status" value="1"/>
</dbReference>
<organism>
    <name type="scientific">Rattus norvegicus</name>
    <name type="common">Rat</name>
    <dbReference type="NCBI Taxonomy" id="10116"/>
    <lineage>
        <taxon>Eukaryota</taxon>
        <taxon>Metazoa</taxon>
        <taxon>Chordata</taxon>
        <taxon>Craniata</taxon>
        <taxon>Vertebrata</taxon>
        <taxon>Euteleostomi</taxon>
        <taxon>Mammalia</taxon>
        <taxon>Eutheria</taxon>
        <taxon>Euarchontoglires</taxon>
        <taxon>Glires</taxon>
        <taxon>Rodentia</taxon>
        <taxon>Myomorpha</taxon>
        <taxon>Muroidea</taxon>
        <taxon>Muridae</taxon>
        <taxon>Murinae</taxon>
        <taxon>Rattus</taxon>
    </lineage>
</organism>
<feature type="signal peptide" evidence="5">
    <location>
        <begin position="1"/>
        <end position="31"/>
    </location>
</feature>
<feature type="propeptide" id="PRO_0000415563" evidence="5">
    <location>
        <begin position="32"/>
        <end position="68"/>
    </location>
</feature>
<feature type="peptide" id="PRO_0000415564" description="Augurin">
    <location>
        <begin position="71"/>
        <end position="132"/>
    </location>
</feature>
<feature type="propeptide" id="PRO_0000415565" evidence="2">
    <location>
        <begin position="133"/>
        <end position="148"/>
    </location>
</feature>
<name>AUGN_RAT</name>
<proteinExistence type="evidence at protein level"/>
<gene>
    <name evidence="6" type="primary">Ecrg4</name>
</gene>
<evidence type="ECO:0000250" key="1">
    <source>
        <dbReference type="UniProtKB" id="Q9H1Z8"/>
    </source>
</evidence>
<evidence type="ECO:0000255" key="2"/>
<evidence type="ECO:0000269" key="3">
    <source>
    </source>
</evidence>
<evidence type="ECO:0000269" key="4">
    <source>
    </source>
</evidence>
<evidence type="ECO:0000269" key="5">
    <source>
    </source>
</evidence>
<evidence type="ECO:0000305" key="6"/>
<comment type="function">
    <text evidence="3 4">Probable hormone that may attenuate cell proliferation and induce senescence of oligodendrocyte and neural precursor cells in the central nervous system (PubMed:20404145, PubMed:21349154). ECRG4-induced senescence is characterized by G1 arrest, RB1 dephosphorylation and accelerated CCND1 and CCND3 proteasomal degradation (PubMed:20404145).</text>
</comment>
<comment type="subcellular location">
    <subcellularLocation>
        <location evidence="1">Secreted</location>
    </subcellularLocation>
    <subcellularLocation>
        <location evidence="4">Cytoplasm</location>
    </subcellularLocation>
    <subcellularLocation>
        <location evidence="1">Apical cell membrane</location>
    </subcellularLocation>
</comment>
<comment type="tissue specificity">
    <text evidence="4">Expressed in the brain, with expression in the choroid plexus and the ventricular ependymal cells (at protein level).</text>
</comment>
<comment type="induction">
    <text evidence="4">Decreased expression in the choroid plexus after penetrating injury in the central nervous system.</text>
</comment>
<comment type="similarity">
    <text evidence="6">Belongs to the augurin family.</text>
</comment>
<sequence>MGTSSARPAVLALAGLALLLLLCLGPGDVSGNKLKKMLQKREGPVPSKTNVAVSEHTAKEFLGGLKRAKRQLWDRTRPEVQQWYQQFLYMGFDEAKFEDDVNYWLNRNQNGHDYYGDYYQRHYDEDAAIGPRSREGFRHGASVNYDDY</sequence>